<comment type="function">
    <text evidence="1">Involved in allosteric regulation of aspartate carbamoyltransferase.</text>
</comment>
<comment type="cofactor">
    <cofactor evidence="1">
        <name>Zn(2+)</name>
        <dbReference type="ChEBI" id="CHEBI:29105"/>
    </cofactor>
    <text evidence="1">Binds 1 zinc ion per subunit.</text>
</comment>
<comment type="subunit">
    <text evidence="1">Contains catalytic and regulatory chains.</text>
</comment>
<comment type="similarity">
    <text evidence="1">Belongs to the PyrI family.</text>
</comment>
<evidence type="ECO:0000255" key="1">
    <source>
        <dbReference type="HAMAP-Rule" id="MF_00002"/>
    </source>
</evidence>
<keyword id="KW-0479">Metal-binding</keyword>
<keyword id="KW-0665">Pyrimidine biosynthesis</keyword>
<keyword id="KW-1185">Reference proteome</keyword>
<keyword id="KW-0862">Zinc</keyword>
<dbReference type="EMBL" id="CP000505">
    <property type="protein sequence ID" value="ABL78556.1"/>
    <property type="molecule type" value="Genomic_DNA"/>
</dbReference>
<dbReference type="RefSeq" id="WP_011752821.1">
    <property type="nucleotide sequence ID" value="NC_008698.1"/>
</dbReference>
<dbReference type="SMR" id="A1RZC6"/>
<dbReference type="STRING" id="368408.Tpen_1158"/>
<dbReference type="EnsemblBacteria" id="ABL78556">
    <property type="protein sequence ID" value="ABL78556"/>
    <property type="gene ID" value="Tpen_1158"/>
</dbReference>
<dbReference type="GeneID" id="4602160"/>
<dbReference type="KEGG" id="tpe:Tpen_1158"/>
<dbReference type="eggNOG" id="arCOG04229">
    <property type="taxonomic scope" value="Archaea"/>
</dbReference>
<dbReference type="HOGENOM" id="CLU_128576_0_0_2"/>
<dbReference type="OrthoDB" id="7000at2157"/>
<dbReference type="Proteomes" id="UP000000641">
    <property type="component" value="Chromosome"/>
</dbReference>
<dbReference type="GO" id="GO:0009347">
    <property type="term" value="C:aspartate carbamoyltransferase complex"/>
    <property type="evidence" value="ECO:0007669"/>
    <property type="project" value="InterPro"/>
</dbReference>
<dbReference type="GO" id="GO:0046872">
    <property type="term" value="F:metal ion binding"/>
    <property type="evidence" value="ECO:0007669"/>
    <property type="project" value="UniProtKB-KW"/>
</dbReference>
<dbReference type="GO" id="GO:0006207">
    <property type="term" value="P:'de novo' pyrimidine nucleobase biosynthetic process"/>
    <property type="evidence" value="ECO:0007669"/>
    <property type="project" value="InterPro"/>
</dbReference>
<dbReference type="GO" id="GO:0006221">
    <property type="term" value="P:pyrimidine nucleotide biosynthetic process"/>
    <property type="evidence" value="ECO:0007669"/>
    <property type="project" value="UniProtKB-UniRule"/>
</dbReference>
<dbReference type="Gene3D" id="2.30.30.20">
    <property type="entry name" value="Aspartate carbamoyltransferase regulatory subunit, C-terminal domain"/>
    <property type="match status" value="1"/>
</dbReference>
<dbReference type="Gene3D" id="3.30.70.140">
    <property type="entry name" value="Aspartate carbamoyltransferase regulatory subunit, N-terminal domain"/>
    <property type="match status" value="1"/>
</dbReference>
<dbReference type="HAMAP" id="MF_00002">
    <property type="entry name" value="Asp_carb_tr_reg"/>
    <property type="match status" value="1"/>
</dbReference>
<dbReference type="InterPro" id="IPR020545">
    <property type="entry name" value="Asp_carbamoyltransf_reg_N"/>
</dbReference>
<dbReference type="InterPro" id="IPR002801">
    <property type="entry name" value="Asp_carbamoylTrfase_reg"/>
</dbReference>
<dbReference type="InterPro" id="IPR020542">
    <property type="entry name" value="Asp_carbamoyltrfase_reg_C"/>
</dbReference>
<dbReference type="InterPro" id="IPR036792">
    <property type="entry name" value="Asp_carbatrfase_reg_C_sf"/>
</dbReference>
<dbReference type="InterPro" id="IPR036793">
    <property type="entry name" value="Asp_carbatrfase_reg_N_sf"/>
</dbReference>
<dbReference type="NCBIfam" id="TIGR00240">
    <property type="entry name" value="ATCase_reg"/>
    <property type="match status" value="1"/>
</dbReference>
<dbReference type="PANTHER" id="PTHR35805">
    <property type="entry name" value="ASPARTATE CARBAMOYLTRANSFERASE REGULATORY CHAIN"/>
    <property type="match status" value="1"/>
</dbReference>
<dbReference type="PANTHER" id="PTHR35805:SF1">
    <property type="entry name" value="ASPARTATE CARBAMOYLTRANSFERASE REGULATORY CHAIN"/>
    <property type="match status" value="1"/>
</dbReference>
<dbReference type="Pfam" id="PF01948">
    <property type="entry name" value="PyrI"/>
    <property type="match status" value="1"/>
</dbReference>
<dbReference type="Pfam" id="PF02748">
    <property type="entry name" value="PyrI_C"/>
    <property type="match status" value="1"/>
</dbReference>
<dbReference type="SUPFAM" id="SSF57825">
    <property type="entry name" value="Aspartate carbamoyltransferase, Regulatory-chain, C-terminal domain"/>
    <property type="match status" value="1"/>
</dbReference>
<dbReference type="SUPFAM" id="SSF54893">
    <property type="entry name" value="Aspartate carbamoyltransferase, Regulatory-chain, N-terminal domain"/>
    <property type="match status" value="1"/>
</dbReference>
<accession>A1RZC6</accession>
<organism>
    <name type="scientific">Thermofilum pendens (strain DSM 2475 / Hrk 5)</name>
    <dbReference type="NCBI Taxonomy" id="368408"/>
    <lineage>
        <taxon>Archaea</taxon>
        <taxon>Thermoproteota</taxon>
        <taxon>Thermoprotei</taxon>
        <taxon>Thermofilales</taxon>
        <taxon>Thermofilaceae</taxon>
        <taxon>Thermofilum</taxon>
    </lineage>
</organism>
<gene>
    <name evidence="1" type="primary">pyrI</name>
    <name type="ordered locus">Tpen_1158</name>
</gene>
<reference key="1">
    <citation type="journal article" date="2008" name="J. Bacteriol.">
        <title>Genome sequence of Thermofilum pendens reveals an exceptional loss of biosynthetic pathways without genome reduction.</title>
        <authorList>
            <person name="Anderson I."/>
            <person name="Rodriguez J."/>
            <person name="Susanti D."/>
            <person name="Porat I."/>
            <person name="Reich C."/>
            <person name="Ulrich L.E."/>
            <person name="Elkins J.G."/>
            <person name="Mavromatis K."/>
            <person name="Lykidis A."/>
            <person name="Kim E."/>
            <person name="Thompson L.S."/>
            <person name="Nolan M."/>
            <person name="Land M."/>
            <person name="Copeland A."/>
            <person name="Lapidus A."/>
            <person name="Lucas S."/>
            <person name="Detter C."/>
            <person name="Zhulin I.B."/>
            <person name="Olsen G.J."/>
            <person name="Whitman W."/>
            <person name="Mukhopadhyay B."/>
            <person name="Bristow J."/>
            <person name="Kyrpides N."/>
        </authorList>
    </citation>
    <scope>NUCLEOTIDE SEQUENCE [LARGE SCALE GENOMIC DNA]</scope>
    <source>
        <strain>DSM 2475 / Hrk 5</strain>
    </source>
</reference>
<protein>
    <recommendedName>
        <fullName evidence="1">Aspartate carbamoyltransferase regulatory chain</fullName>
    </recommendedName>
</protein>
<proteinExistence type="inferred from homology"/>
<sequence length="159" mass="17481">MEEGLLVRKIREGTVIDHIPAGRALNVLKILGLTGREGLTIAVVMNVPSRKLGVKDIVKVEKRFLEPSEVDKIALIAPSATINIIRDFQVASKRRVEPPAVVTGILRCPNPNCVTNSEREPVTPRFVRVSLSPLKLKCAYCEETLSEAEIVDQLVSPYG</sequence>
<name>PYRI_THEPD</name>
<feature type="chain" id="PRO_1000000053" description="Aspartate carbamoyltransferase regulatory chain">
    <location>
        <begin position="1"/>
        <end position="159"/>
    </location>
</feature>
<feature type="binding site" evidence="1">
    <location>
        <position position="108"/>
    </location>
    <ligand>
        <name>Zn(2+)</name>
        <dbReference type="ChEBI" id="CHEBI:29105"/>
    </ligand>
</feature>
<feature type="binding site" evidence="1">
    <location>
        <position position="113"/>
    </location>
    <ligand>
        <name>Zn(2+)</name>
        <dbReference type="ChEBI" id="CHEBI:29105"/>
    </ligand>
</feature>
<feature type="binding site" evidence="1">
    <location>
        <position position="138"/>
    </location>
    <ligand>
        <name>Zn(2+)</name>
        <dbReference type="ChEBI" id="CHEBI:29105"/>
    </ligand>
</feature>
<feature type="binding site" evidence="1">
    <location>
        <position position="141"/>
    </location>
    <ligand>
        <name>Zn(2+)</name>
        <dbReference type="ChEBI" id="CHEBI:29105"/>
    </ligand>
</feature>